<gene>
    <name type="primary">IL2</name>
</gene>
<reference key="1">
    <citation type="submission" date="1997-02" db="EMBL/GenBank/DDBJ databases">
        <authorList>
            <person name="Murillo L.A."/>
            <person name="Hernandez E."/>
            <person name="Echeverry S.J."/>
            <person name="Mendez J.A."/>
            <person name="Moreno A."/>
            <person name="Patarroyo M.E."/>
        </authorList>
    </citation>
    <scope>NUCLEOTIDE SEQUENCE [MRNA]</scope>
</reference>
<sequence>MYRMQLLSCIALSLALITNSAPTSSSTKKTQLQLEHLLLDLQMLLNGINNYKNPKLTRMLTFKFYMPKKATELKHLQCLEEELKPLEEVLNLAQSKNFHLRDTRDIISNINVLVLELKGSETTFTCEYDDDTATIIEFLNGWITFCQSIISTLT</sequence>
<dbReference type="EMBL" id="U88361">
    <property type="protein sequence ID" value="AAD41535.1"/>
    <property type="molecule type" value="mRNA"/>
</dbReference>
<dbReference type="RefSeq" id="NP_001295461.1">
    <property type="nucleotide sequence ID" value="NM_001308532.1"/>
</dbReference>
<dbReference type="SMR" id="Q7JFM5"/>
<dbReference type="STRING" id="37293.ENSANAP00000017736"/>
<dbReference type="GlyCosmos" id="Q7JFM5">
    <property type="glycosylation" value="1 site, No reported glycans"/>
</dbReference>
<dbReference type="Ensembl" id="ENSANAT00000035594.1">
    <property type="protein sequence ID" value="ENSANAP00000017736.1"/>
    <property type="gene ID" value="ENSANAG00000026729.1"/>
</dbReference>
<dbReference type="GeneID" id="105731298"/>
<dbReference type="KEGG" id="anan:105731298"/>
<dbReference type="CTD" id="3558"/>
<dbReference type="GeneTree" id="ENSGT00390000003555"/>
<dbReference type="OMA" id="NGVNNYE"/>
<dbReference type="OrthoDB" id="9450228at2759"/>
<dbReference type="Proteomes" id="UP000233020">
    <property type="component" value="Unplaced"/>
</dbReference>
<dbReference type="GO" id="GO:0005615">
    <property type="term" value="C:extracellular space"/>
    <property type="evidence" value="ECO:0007669"/>
    <property type="project" value="UniProtKB-KW"/>
</dbReference>
<dbReference type="GO" id="GO:0005125">
    <property type="term" value="F:cytokine activity"/>
    <property type="evidence" value="ECO:0007669"/>
    <property type="project" value="UniProtKB-KW"/>
</dbReference>
<dbReference type="GO" id="GO:0008083">
    <property type="term" value="F:growth factor activity"/>
    <property type="evidence" value="ECO:0007669"/>
    <property type="project" value="UniProtKB-KW"/>
</dbReference>
<dbReference type="GO" id="GO:0005134">
    <property type="term" value="F:interleukin-2 receptor binding"/>
    <property type="evidence" value="ECO:0007669"/>
    <property type="project" value="Ensembl"/>
</dbReference>
<dbReference type="GO" id="GO:0050798">
    <property type="term" value="P:activated T cell proliferation"/>
    <property type="evidence" value="ECO:0007669"/>
    <property type="project" value="Ensembl"/>
</dbReference>
<dbReference type="GO" id="GO:0002250">
    <property type="term" value="P:adaptive immune response"/>
    <property type="evidence" value="ECO:0007669"/>
    <property type="project" value="UniProtKB-KW"/>
</dbReference>
<dbReference type="GO" id="GO:0097696">
    <property type="term" value="P:cell surface receptor signaling pathway via STAT"/>
    <property type="evidence" value="ECO:0007669"/>
    <property type="project" value="Ensembl"/>
</dbReference>
<dbReference type="GO" id="GO:0097192">
    <property type="term" value="P:extrinsic apoptotic signaling pathway in absence of ligand"/>
    <property type="evidence" value="ECO:0007669"/>
    <property type="project" value="Ensembl"/>
</dbReference>
<dbReference type="GO" id="GO:0038110">
    <property type="term" value="P:interleukin-2-mediated signaling pathway"/>
    <property type="evidence" value="ECO:0007669"/>
    <property type="project" value="Ensembl"/>
</dbReference>
<dbReference type="GO" id="GO:0002366">
    <property type="term" value="P:leukocyte activation involved in immune response"/>
    <property type="evidence" value="ECO:0007669"/>
    <property type="project" value="Ensembl"/>
</dbReference>
<dbReference type="GO" id="GO:0002903">
    <property type="term" value="P:negative regulation of B cell apoptotic process"/>
    <property type="evidence" value="ECO:0007669"/>
    <property type="project" value="Ensembl"/>
</dbReference>
<dbReference type="GO" id="GO:0050728">
    <property type="term" value="P:negative regulation of inflammatory response"/>
    <property type="evidence" value="ECO:0007669"/>
    <property type="project" value="Ensembl"/>
</dbReference>
<dbReference type="GO" id="GO:0050672">
    <property type="term" value="P:negative regulation of lymphocyte proliferation"/>
    <property type="evidence" value="ECO:0007669"/>
    <property type="project" value="Ensembl"/>
</dbReference>
<dbReference type="GO" id="GO:2000320">
    <property type="term" value="P:negative regulation of T-helper 17 cell differentiation"/>
    <property type="evidence" value="ECO:0007669"/>
    <property type="project" value="Ensembl"/>
</dbReference>
<dbReference type="GO" id="GO:0042104">
    <property type="term" value="P:positive regulation of activated T cell proliferation"/>
    <property type="evidence" value="ECO:0007669"/>
    <property type="project" value="Ensembl"/>
</dbReference>
<dbReference type="GO" id="GO:0030890">
    <property type="term" value="P:positive regulation of B cell proliferation"/>
    <property type="evidence" value="ECO:0007669"/>
    <property type="project" value="Ensembl"/>
</dbReference>
<dbReference type="GO" id="GO:0032740">
    <property type="term" value="P:positive regulation of interleukin-17 production"/>
    <property type="evidence" value="ECO:0007669"/>
    <property type="project" value="Ensembl"/>
</dbReference>
<dbReference type="GO" id="GO:0048304">
    <property type="term" value="P:positive regulation of isotype switching to IgG isotypes"/>
    <property type="evidence" value="ECO:0007669"/>
    <property type="project" value="Ensembl"/>
</dbReference>
<dbReference type="GO" id="GO:1900100">
    <property type="term" value="P:positive regulation of plasma cell differentiation"/>
    <property type="evidence" value="ECO:0007669"/>
    <property type="project" value="Ensembl"/>
</dbReference>
<dbReference type="GO" id="GO:0045944">
    <property type="term" value="P:positive regulation of transcription by RNA polymerase II"/>
    <property type="evidence" value="ECO:0007669"/>
    <property type="project" value="Ensembl"/>
</dbReference>
<dbReference type="GO" id="GO:0032729">
    <property type="term" value="P:positive regulation of type II interferon production"/>
    <property type="evidence" value="ECO:0007669"/>
    <property type="project" value="Ensembl"/>
</dbReference>
<dbReference type="GO" id="GO:2000561">
    <property type="term" value="P:regulation of CD4-positive, alpha-beta T cell proliferation"/>
    <property type="evidence" value="ECO:0007669"/>
    <property type="project" value="Ensembl"/>
</dbReference>
<dbReference type="GO" id="GO:0046013">
    <property type="term" value="P:regulation of T cell homeostatic proliferation"/>
    <property type="evidence" value="ECO:0007669"/>
    <property type="project" value="Ensembl"/>
</dbReference>
<dbReference type="GO" id="GO:0006366">
    <property type="term" value="P:transcription by RNA polymerase II"/>
    <property type="evidence" value="ECO:0007669"/>
    <property type="project" value="Ensembl"/>
</dbReference>
<dbReference type="FunFam" id="1.20.1250.10:FF:000025">
    <property type="entry name" value="Interleukin-2"/>
    <property type="match status" value="1"/>
</dbReference>
<dbReference type="Gene3D" id="1.20.1250.10">
    <property type="match status" value="1"/>
</dbReference>
<dbReference type="InterPro" id="IPR009079">
    <property type="entry name" value="4_helix_cytokine-like_core"/>
</dbReference>
<dbReference type="InterPro" id="IPR000779">
    <property type="entry name" value="IL-2"/>
</dbReference>
<dbReference type="InterPro" id="IPR030477">
    <property type="entry name" value="IL-2_CS"/>
</dbReference>
<dbReference type="PANTHER" id="PTHR48487">
    <property type="entry name" value="INTERLEUKIN-2"/>
    <property type="match status" value="1"/>
</dbReference>
<dbReference type="PANTHER" id="PTHR48487:SF1">
    <property type="entry name" value="INTERLEUKIN-2"/>
    <property type="match status" value="1"/>
</dbReference>
<dbReference type="Pfam" id="PF00715">
    <property type="entry name" value="IL2"/>
    <property type="match status" value="1"/>
</dbReference>
<dbReference type="PRINTS" id="PR00265">
    <property type="entry name" value="INTERLEUKIN2"/>
</dbReference>
<dbReference type="SMART" id="SM00189">
    <property type="entry name" value="IL2"/>
    <property type="match status" value="1"/>
</dbReference>
<dbReference type="SUPFAM" id="SSF47266">
    <property type="entry name" value="4-helical cytokines"/>
    <property type="match status" value="1"/>
</dbReference>
<dbReference type="PROSITE" id="PS00424">
    <property type="entry name" value="INTERLEUKIN_2"/>
    <property type="match status" value="1"/>
</dbReference>
<keyword id="KW-1064">Adaptive immunity</keyword>
<keyword id="KW-0202">Cytokine</keyword>
<keyword id="KW-1015">Disulfide bond</keyword>
<keyword id="KW-0325">Glycoprotein</keyword>
<keyword id="KW-0339">Growth factor</keyword>
<keyword id="KW-0391">Immunity</keyword>
<keyword id="KW-1185">Reference proteome</keyword>
<keyword id="KW-0964">Secreted</keyword>
<keyword id="KW-0732">Signal</keyword>
<comment type="function">
    <text evidence="2">Cytokine produced by activated CD4-positive helper T-cells and to a lesser extend activated CD8-positive T-cells and natural killer (NK) cells that plays pivotal roles in the immune response and tolerance. Binds to a receptor complex composed of either the high-affinity trimeric IL-2R (IL2RA/CD25, IL2RB/CD122 and IL2RG/CD132) or the low-affinity dimeric IL-2R (IL2RB and IL2RG). Interaction with the receptor leads to oligomerization and conformation changes in the IL-2R subunits resulting in downstream signaling starting with phosphorylation of JAK1 and JAK3. In turn, JAK1 and JAK3 phosphorylate the receptor to form a docking site leading to the phosphorylation of several substrates including STAT5. This process leads to activation of several pathways including STAT, phosphoinositide-3-kinase/PI3K and mitogen-activated protein kinase/MAPK pathways. Functions as a T-cell growth factor and can increase NK-cell cytolytic activity as well. Promotes strong proliferation of activated B-cells and subsequently immunoglobulin production. Plays a pivotal role in regulating the adaptive immune system by controlling the survival and proliferation of regulatory T-cells, which are required for the maintenance of immune tolerance. Moreover, participates in the differentiation and homeostasis of effector T-cell subsets, including Th1, Th2, Th17 as well as memory CD8-positive T-cells.</text>
</comment>
<comment type="subcellular location">
    <subcellularLocation>
        <location evidence="1">Secreted</location>
    </subcellularLocation>
</comment>
<comment type="similarity">
    <text evidence="3">Belongs to the IL-2 family.</text>
</comment>
<protein>
    <recommendedName>
        <fullName>Interleukin-2</fullName>
        <shortName>IL-2</shortName>
    </recommendedName>
    <alternativeName>
        <fullName>T-cell growth factor</fullName>
        <shortName>TCGF</shortName>
    </alternativeName>
</protein>
<proteinExistence type="evidence at transcript level"/>
<evidence type="ECO:0000250" key="1"/>
<evidence type="ECO:0000250" key="2">
    <source>
        <dbReference type="UniProtKB" id="P60568"/>
    </source>
</evidence>
<evidence type="ECO:0000305" key="3"/>
<feature type="signal peptide" evidence="1">
    <location>
        <begin position="1"/>
        <end position="20"/>
    </location>
</feature>
<feature type="chain" id="PRO_0000015471" description="Interleukin-2">
    <location>
        <begin position="21"/>
        <end position="154"/>
    </location>
</feature>
<feature type="glycosylation site" description="O-linked (GalNAc...) threonine" evidence="1">
    <location>
        <position position="23"/>
    </location>
</feature>
<feature type="disulfide bond" evidence="1">
    <location>
        <begin position="78"/>
        <end position="126"/>
    </location>
</feature>
<name>IL2_AOTNA</name>
<organism>
    <name type="scientific">Aotus nancymaae</name>
    <name type="common">Ma's night monkey</name>
    <dbReference type="NCBI Taxonomy" id="37293"/>
    <lineage>
        <taxon>Eukaryota</taxon>
        <taxon>Metazoa</taxon>
        <taxon>Chordata</taxon>
        <taxon>Craniata</taxon>
        <taxon>Vertebrata</taxon>
        <taxon>Euteleostomi</taxon>
        <taxon>Mammalia</taxon>
        <taxon>Eutheria</taxon>
        <taxon>Euarchontoglires</taxon>
        <taxon>Primates</taxon>
        <taxon>Haplorrhini</taxon>
        <taxon>Platyrrhini</taxon>
        <taxon>Aotidae</taxon>
        <taxon>Aotus</taxon>
    </lineage>
</organism>
<accession>Q7JFM5</accession>